<organism>
    <name type="scientific">Haemophilus influenzae (strain PittEE)</name>
    <dbReference type="NCBI Taxonomy" id="374930"/>
    <lineage>
        <taxon>Bacteria</taxon>
        <taxon>Pseudomonadati</taxon>
        <taxon>Pseudomonadota</taxon>
        <taxon>Gammaproteobacteria</taxon>
        <taxon>Pasteurellales</taxon>
        <taxon>Pasteurellaceae</taxon>
        <taxon>Haemophilus</taxon>
    </lineage>
</organism>
<name>RUVA_HAEIE</name>
<comment type="function">
    <text evidence="1">The RuvA-RuvB-RuvC complex processes Holliday junction (HJ) DNA during genetic recombination and DNA repair, while the RuvA-RuvB complex plays an important role in the rescue of blocked DNA replication forks via replication fork reversal (RFR). RuvA specifically binds to HJ cruciform DNA, conferring on it an open structure. The RuvB hexamer acts as an ATP-dependent pump, pulling dsDNA into and through the RuvAB complex. HJ branch migration allows RuvC to scan DNA until it finds its consensus sequence, where it cleaves and resolves the cruciform DNA.</text>
</comment>
<comment type="subunit">
    <text evidence="1">Homotetramer. Forms an RuvA(8)-RuvB(12)-Holliday junction (HJ) complex. HJ DNA is sandwiched between 2 RuvA tetramers; dsDNA enters through RuvA and exits via RuvB. An RuvB hexamer assembles on each DNA strand where it exits the tetramer. Each RuvB hexamer is contacted by two RuvA subunits (via domain III) on 2 adjacent RuvB subunits; this complex drives branch migration. In the full resolvosome a probable DNA-RuvA(4)-RuvB(12)-RuvC(2) complex forms which resolves the HJ.</text>
</comment>
<comment type="subcellular location">
    <subcellularLocation>
        <location evidence="1">Cytoplasm</location>
    </subcellularLocation>
</comment>
<comment type="domain">
    <text evidence="1">Has three domains with a flexible linker between the domains II and III and assumes an 'L' shape. Domain III is highly mobile and contacts RuvB.</text>
</comment>
<comment type="similarity">
    <text evidence="1">Belongs to the RuvA family.</text>
</comment>
<protein>
    <recommendedName>
        <fullName evidence="1">Holliday junction branch migration complex subunit RuvA</fullName>
    </recommendedName>
</protein>
<keyword id="KW-0963">Cytoplasm</keyword>
<keyword id="KW-0227">DNA damage</keyword>
<keyword id="KW-0233">DNA recombination</keyword>
<keyword id="KW-0234">DNA repair</keyword>
<keyword id="KW-0238">DNA-binding</keyword>
<proteinExistence type="inferred from homology"/>
<reference key="1">
    <citation type="journal article" date="2007" name="Genome Biol.">
        <title>Characterization and modeling of the Haemophilus influenzae core and supragenomes based on the complete genomic sequences of Rd and 12 clinical nontypeable strains.</title>
        <authorList>
            <person name="Hogg J.S."/>
            <person name="Hu F.Z."/>
            <person name="Janto B."/>
            <person name="Boissy R."/>
            <person name="Hayes J."/>
            <person name="Keefe R."/>
            <person name="Post J.C."/>
            <person name="Ehrlich G.D."/>
        </authorList>
    </citation>
    <scope>NUCLEOTIDE SEQUENCE [LARGE SCALE GENOMIC DNA]</scope>
    <source>
        <strain>PittEE</strain>
    </source>
</reference>
<dbReference type="EMBL" id="CP000671">
    <property type="protein sequence ID" value="ABQ97778.1"/>
    <property type="molecule type" value="Genomic_DNA"/>
</dbReference>
<dbReference type="SMR" id="A5UAH7"/>
<dbReference type="KEGG" id="hip:CGSHiEE_01490"/>
<dbReference type="HOGENOM" id="CLU_087936_0_0_6"/>
<dbReference type="GO" id="GO:0005737">
    <property type="term" value="C:cytoplasm"/>
    <property type="evidence" value="ECO:0007669"/>
    <property type="project" value="UniProtKB-SubCell"/>
</dbReference>
<dbReference type="GO" id="GO:0009379">
    <property type="term" value="C:Holliday junction helicase complex"/>
    <property type="evidence" value="ECO:0007669"/>
    <property type="project" value="InterPro"/>
</dbReference>
<dbReference type="GO" id="GO:0048476">
    <property type="term" value="C:Holliday junction resolvase complex"/>
    <property type="evidence" value="ECO:0007669"/>
    <property type="project" value="UniProtKB-UniRule"/>
</dbReference>
<dbReference type="GO" id="GO:0005524">
    <property type="term" value="F:ATP binding"/>
    <property type="evidence" value="ECO:0007669"/>
    <property type="project" value="InterPro"/>
</dbReference>
<dbReference type="GO" id="GO:0000400">
    <property type="term" value="F:four-way junction DNA binding"/>
    <property type="evidence" value="ECO:0007669"/>
    <property type="project" value="UniProtKB-UniRule"/>
</dbReference>
<dbReference type="GO" id="GO:0009378">
    <property type="term" value="F:four-way junction helicase activity"/>
    <property type="evidence" value="ECO:0007669"/>
    <property type="project" value="InterPro"/>
</dbReference>
<dbReference type="GO" id="GO:0006310">
    <property type="term" value="P:DNA recombination"/>
    <property type="evidence" value="ECO:0007669"/>
    <property type="project" value="UniProtKB-UniRule"/>
</dbReference>
<dbReference type="GO" id="GO:0006281">
    <property type="term" value="P:DNA repair"/>
    <property type="evidence" value="ECO:0007669"/>
    <property type="project" value="UniProtKB-UniRule"/>
</dbReference>
<dbReference type="CDD" id="cd14332">
    <property type="entry name" value="UBA_RuvA_C"/>
    <property type="match status" value="1"/>
</dbReference>
<dbReference type="FunFam" id="2.40.50.140:FF:000083">
    <property type="entry name" value="Holliday junction ATP-dependent DNA helicase RuvA"/>
    <property type="match status" value="1"/>
</dbReference>
<dbReference type="Gene3D" id="1.10.150.20">
    <property type="entry name" value="5' to 3' exonuclease, C-terminal subdomain"/>
    <property type="match status" value="1"/>
</dbReference>
<dbReference type="Gene3D" id="1.10.8.10">
    <property type="entry name" value="DNA helicase RuvA subunit, C-terminal domain"/>
    <property type="match status" value="1"/>
</dbReference>
<dbReference type="Gene3D" id="2.40.50.140">
    <property type="entry name" value="Nucleic acid-binding proteins"/>
    <property type="match status" value="1"/>
</dbReference>
<dbReference type="HAMAP" id="MF_00031">
    <property type="entry name" value="DNA_HJ_migration_RuvA"/>
    <property type="match status" value="1"/>
</dbReference>
<dbReference type="InterPro" id="IPR013849">
    <property type="entry name" value="DNA_helicase_Holl-junc_RuvA_I"/>
</dbReference>
<dbReference type="InterPro" id="IPR003583">
    <property type="entry name" value="Hlx-hairpin-Hlx_DNA-bd_motif"/>
</dbReference>
<dbReference type="InterPro" id="IPR012340">
    <property type="entry name" value="NA-bd_OB-fold"/>
</dbReference>
<dbReference type="InterPro" id="IPR000085">
    <property type="entry name" value="RuvA"/>
</dbReference>
<dbReference type="InterPro" id="IPR010994">
    <property type="entry name" value="RuvA_2-like"/>
</dbReference>
<dbReference type="InterPro" id="IPR011114">
    <property type="entry name" value="RuvA_C"/>
</dbReference>
<dbReference type="InterPro" id="IPR036267">
    <property type="entry name" value="RuvA_C_sf"/>
</dbReference>
<dbReference type="NCBIfam" id="TIGR00084">
    <property type="entry name" value="ruvA"/>
    <property type="match status" value="1"/>
</dbReference>
<dbReference type="Pfam" id="PF14520">
    <property type="entry name" value="HHH_5"/>
    <property type="match status" value="1"/>
</dbReference>
<dbReference type="Pfam" id="PF07499">
    <property type="entry name" value="RuvA_C"/>
    <property type="match status" value="1"/>
</dbReference>
<dbReference type="Pfam" id="PF01330">
    <property type="entry name" value="RuvA_N"/>
    <property type="match status" value="1"/>
</dbReference>
<dbReference type="SMART" id="SM00278">
    <property type="entry name" value="HhH1"/>
    <property type="match status" value="2"/>
</dbReference>
<dbReference type="SUPFAM" id="SSF46929">
    <property type="entry name" value="DNA helicase RuvA subunit, C-terminal domain"/>
    <property type="match status" value="1"/>
</dbReference>
<dbReference type="SUPFAM" id="SSF50249">
    <property type="entry name" value="Nucleic acid-binding proteins"/>
    <property type="match status" value="1"/>
</dbReference>
<dbReference type="SUPFAM" id="SSF47781">
    <property type="entry name" value="RuvA domain 2-like"/>
    <property type="match status" value="1"/>
</dbReference>
<evidence type="ECO:0000255" key="1">
    <source>
        <dbReference type="HAMAP-Rule" id="MF_00031"/>
    </source>
</evidence>
<sequence>MIGRLQGILLEKQPPEILLNVQGVGYELLLPMTSFYDLPEIGQETTLFTHLVVREDAHLLFGFAQKTDRTLFRELIKTNGVGPKLALAILSAMSVEQFAYAIEREELSKLTKIPGVGKKTAERLLVELKGKFKGVKQSDFFVESTHIPLSPSIESHSESSSDEAISALIALGYKPVEAEKMVKRVAKPELTSEQVIREALKAAL</sequence>
<feature type="chain" id="PRO_1000002457" description="Holliday junction branch migration complex subunit RuvA">
    <location>
        <begin position="1"/>
        <end position="204"/>
    </location>
</feature>
<feature type="region of interest" description="Domain I" evidence="1">
    <location>
        <begin position="1"/>
        <end position="64"/>
    </location>
</feature>
<feature type="region of interest" description="Domain II" evidence="1">
    <location>
        <begin position="65"/>
        <end position="143"/>
    </location>
</feature>
<feature type="region of interest" description="Flexible linker" evidence="1">
    <location>
        <begin position="144"/>
        <end position="155"/>
    </location>
</feature>
<feature type="region of interest" description="Domain III" evidence="1">
    <location>
        <begin position="156"/>
        <end position="204"/>
    </location>
</feature>
<accession>A5UAH7</accession>
<gene>
    <name evidence="1" type="primary">ruvA</name>
    <name type="ordered locus">CGSHiEE_01490</name>
</gene>